<gene>
    <name type="primary">B2M</name>
</gene>
<name>B2MG_CALAU</name>
<dbReference type="EMBL" id="AF084621">
    <property type="protein sequence ID" value="AAF21789.1"/>
    <property type="molecule type" value="Genomic_DNA"/>
</dbReference>
<dbReference type="EMBL" id="AF084619">
    <property type="protein sequence ID" value="AAF21789.1"/>
    <property type="status" value="JOINED"/>
    <property type="molecule type" value="Genomic_DNA"/>
</dbReference>
<dbReference type="EMBL" id="AF084620">
    <property type="protein sequence ID" value="AAF21789.1"/>
    <property type="status" value="JOINED"/>
    <property type="molecule type" value="Genomic_DNA"/>
</dbReference>
<dbReference type="SMR" id="P63060"/>
<dbReference type="GO" id="GO:0005576">
    <property type="term" value="C:extracellular region"/>
    <property type="evidence" value="ECO:0007669"/>
    <property type="project" value="UniProtKB-SubCell"/>
</dbReference>
<dbReference type="GO" id="GO:0042612">
    <property type="term" value="C:MHC class I protein complex"/>
    <property type="evidence" value="ECO:0007669"/>
    <property type="project" value="UniProtKB-KW"/>
</dbReference>
<dbReference type="GO" id="GO:0002474">
    <property type="term" value="P:antigen processing and presentation of peptide antigen via MHC class I"/>
    <property type="evidence" value="ECO:0007669"/>
    <property type="project" value="UniProtKB-KW"/>
</dbReference>
<dbReference type="GO" id="GO:0006955">
    <property type="term" value="P:immune response"/>
    <property type="evidence" value="ECO:0007669"/>
    <property type="project" value="InterPro"/>
</dbReference>
<dbReference type="CDD" id="cd05770">
    <property type="entry name" value="IgC1_beta2m"/>
    <property type="match status" value="1"/>
</dbReference>
<dbReference type="FunFam" id="2.60.40.10:FF:001005">
    <property type="entry name" value="Beta-2-microglobulin"/>
    <property type="match status" value="1"/>
</dbReference>
<dbReference type="Gene3D" id="2.60.40.10">
    <property type="entry name" value="Immunoglobulins"/>
    <property type="match status" value="1"/>
</dbReference>
<dbReference type="InterPro" id="IPR015707">
    <property type="entry name" value="B2Microglobulin"/>
</dbReference>
<dbReference type="InterPro" id="IPR007110">
    <property type="entry name" value="Ig-like_dom"/>
</dbReference>
<dbReference type="InterPro" id="IPR036179">
    <property type="entry name" value="Ig-like_dom_sf"/>
</dbReference>
<dbReference type="InterPro" id="IPR013783">
    <property type="entry name" value="Ig-like_fold"/>
</dbReference>
<dbReference type="InterPro" id="IPR003006">
    <property type="entry name" value="Ig/MHC_CS"/>
</dbReference>
<dbReference type="InterPro" id="IPR003597">
    <property type="entry name" value="Ig_C1-set"/>
</dbReference>
<dbReference type="InterPro" id="IPR050160">
    <property type="entry name" value="MHC/Immunoglobulin"/>
</dbReference>
<dbReference type="PANTHER" id="PTHR19944:SF62">
    <property type="entry name" value="BETA-2-MICROGLOBULIN"/>
    <property type="match status" value="1"/>
</dbReference>
<dbReference type="PANTHER" id="PTHR19944">
    <property type="entry name" value="MHC CLASS II-RELATED"/>
    <property type="match status" value="1"/>
</dbReference>
<dbReference type="Pfam" id="PF07654">
    <property type="entry name" value="C1-set"/>
    <property type="match status" value="1"/>
</dbReference>
<dbReference type="SMART" id="SM00407">
    <property type="entry name" value="IGc1"/>
    <property type="match status" value="1"/>
</dbReference>
<dbReference type="SUPFAM" id="SSF48726">
    <property type="entry name" value="Immunoglobulin"/>
    <property type="match status" value="1"/>
</dbReference>
<dbReference type="PROSITE" id="PS50835">
    <property type="entry name" value="IG_LIKE"/>
    <property type="match status" value="1"/>
</dbReference>
<dbReference type="PROSITE" id="PS00290">
    <property type="entry name" value="IG_MHC"/>
    <property type="match status" value="1"/>
</dbReference>
<evidence type="ECO:0000250" key="1"/>
<evidence type="ECO:0000255" key="2">
    <source>
        <dbReference type="PROSITE-ProRule" id="PRU00114"/>
    </source>
</evidence>
<evidence type="ECO:0000305" key="3"/>
<keyword id="KW-1015">Disulfide bond</keyword>
<keyword id="KW-0391">Immunity</keyword>
<keyword id="KW-0393">Immunoglobulin domain</keyword>
<keyword id="KW-0490">MHC I</keyword>
<keyword id="KW-0964">Secreted</keyword>
<keyword id="KW-0732">Signal</keyword>
<reference key="1">
    <citation type="journal article" date="1999" name="Am. J. Primatol.">
        <title>Phylogenetic relationships of the Callitrichinae (Platyrrhini, primates) based on beta2-microglobulin DNA sequences.</title>
        <authorList>
            <person name="Canavez F.C."/>
            <person name="Moreira M.A.M."/>
            <person name="Simon F."/>
            <person name="Parham P."/>
            <person name="Seuanez H.N."/>
        </authorList>
    </citation>
    <scope>NUCLEOTIDE SEQUENCE [GENOMIC DNA]</scope>
</reference>
<protein>
    <recommendedName>
        <fullName>Beta-2-microglobulin</fullName>
    </recommendedName>
</protein>
<comment type="function">
    <text evidence="1">Component of the class I major histocompatibility complex (MHC). Involved in the presentation of peptide antigens to the immune system (By similarity).</text>
</comment>
<comment type="subunit">
    <text evidence="1">Heterodimer of an alpha chain and a beta chain. Beta-2-microglobulin is the beta-chain of major histocompatibility complex class I molecules (By similarity).</text>
</comment>
<comment type="subcellular location">
    <subcellularLocation>
        <location evidence="1">Secreted</location>
    </subcellularLocation>
</comment>
<comment type="similarity">
    <text evidence="3">Belongs to the beta-2-microglobulin family.</text>
</comment>
<feature type="signal peptide" evidence="1">
    <location>
        <begin position="1"/>
        <end position="20"/>
    </location>
</feature>
<feature type="chain" id="PRO_0000018759" description="Beta-2-microglobulin">
    <location>
        <begin position="21"/>
        <end position="119"/>
    </location>
</feature>
<feature type="domain" description="Ig-like C1-type">
    <location>
        <begin position="25"/>
        <end position="114"/>
    </location>
</feature>
<feature type="disulfide bond" evidence="2">
    <location>
        <begin position="45"/>
        <end position="100"/>
    </location>
</feature>
<accession>P63060</accession>
<accession>O77522</accession>
<sequence>MASSVVVALLVLLSLSGLEAIQHAPKIQVYSRHPAENGKPNFLNCYVSGFHPSDIEVDLLKNGKKIEKVEHSDLSFSKDWSFYLLYYTEFTPSEKDEYACRVSHVTFSTPKTVKWDRNI</sequence>
<organism>
    <name type="scientific">Callithrix aurita</name>
    <name type="common">White-eared marmoset</name>
    <name type="synonym">Buffy-eared marmoset</name>
    <dbReference type="NCBI Taxonomy" id="57375"/>
    <lineage>
        <taxon>Eukaryota</taxon>
        <taxon>Metazoa</taxon>
        <taxon>Chordata</taxon>
        <taxon>Craniata</taxon>
        <taxon>Vertebrata</taxon>
        <taxon>Euteleostomi</taxon>
        <taxon>Mammalia</taxon>
        <taxon>Eutheria</taxon>
        <taxon>Euarchontoglires</taxon>
        <taxon>Primates</taxon>
        <taxon>Haplorrhini</taxon>
        <taxon>Platyrrhini</taxon>
        <taxon>Cebidae</taxon>
        <taxon>Callitrichinae</taxon>
        <taxon>Callithrix</taxon>
        <taxon>Callithrix</taxon>
    </lineage>
</organism>
<proteinExistence type="inferred from homology"/>